<keyword id="KW-0238">DNA-binding</keyword>
<keyword id="KW-0539">Nucleus</keyword>
<keyword id="KW-1185">Reference proteome</keyword>
<keyword id="KW-0804">Transcription</keyword>
<keyword id="KW-0805">Transcription regulation</keyword>
<name>MTA1_SORMK</name>
<gene>
    <name type="primary">SMTA1</name>
    <name type="ORF">SMAC_05401</name>
</gene>
<reference key="1">
    <citation type="journal article" date="1997" name="Genetics">
        <title>Mating-type genes from the homothallic fungus Sordaria macrospora are functionally expressed in a heterothallic ascomycete.</title>
        <authorList>
            <person name="Poeggeler S."/>
            <person name="Risch S."/>
            <person name="Kueck U."/>
            <person name="Osiewacz H.D."/>
        </authorList>
    </citation>
    <scope>NUCLEOTIDE SEQUENCE [GENOMIC DNA]</scope>
    <source>
        <strain>ATCC MYA-333 / DSM 997 / K(L3346) / K-hell</strain>
    </source>
</reference>
<reference key="2">
    <citation type="journal article" date="2010" name="PLoS Genet.">
        <title>De novo assembly of a 40 Mb eukaryotic genome from short sequence reads: Sordaria macrospora, a model organism for fungal morphogenesis.</title>
        <authorList>
            <person name="Nowrousian M."/>
            <person name="Stajich J.E."/>
            <person name="Chu M."/>
            <person name="Engh I."/>
            <person name="Espagne E."/>
            <person name="Halliday K."/>
            <person name="Kamerewerd J."/>
            <person name="Kempken F."/>
            <person name="Knab B."/>
            <person name="Kuo H.-C."/>
            <person name="Osiewacz H.D."/>
            <person name="Poeggeler S."/>
            <person name="Read N.D."/>
            <person name="Seiler S."/>
            <person name="Smith K.M."/>
            <person name="Zickler D."/>
            <person name="Kueck U."/>
            <person name="Freitag M."/>
        </authorList>
    </citation>
    <scope>NUCLEOTIDE SEQUENCE [LARGE SCALE GENOMIC DNA]</scope>
    <source>
        <strain>ATCC MYA-333 / DSM 997 / K(L3346) / K-hell</strain>
    </source>
</reference>
<feature type="chain" id="PRO_0000206024" description="Mating type protein SmtA-1">
    <location>
        <begin position="1"/>
        <end position="306"/>
    </location>
</feature>
<feature type="DNA-binding region" description="Alpha box" evidence="2">
    <location>
        <begin position="49"/>
        <end position="104"/>
    </location>
</feature>
<feature type="sequence conflict" description="In Ref. 1; CAA71623." evidence="3" ref="1">
    <original>V</original>
    <variation>D</variation>
    <location>
        <position position="130"/>
    </location>
</feature>
<organism>
    <name type="scientific">Sordaria macrospora (strain ATCC MYA-333 / DSM 997 / K(L3346) / K-hell)</name>
    <dbReference type="NCBI Taxonomy" id="771870"/>
    <lineage>
        <taxon>Eukaryota</taxon>
        <taxon>Fungi</taxon>
        <taxon>Dikarya</taxon>
        <taxon>Ascomycota</taxon>
        <taxon>Pezizomycotina</taxon>
        <taxon>Sordariomycetes</taxon>
        <taxon>Sordariomycetidae</taxon>
        <taxon>Sordariales</taxon>
        <taxon>Sordariaceae</taxon>
        <taxon>Sordaria</taxon>
    </lineage>
</organism>
<accession>O42837</accession>
<accession>D1ZKJ8</accession>
<accession>F7VSU4</accession>
<dbReference type="EMBL" id="Y10616">
    <property type="protein sequence ID" value="CAA71623.1"/>
    <property type="molecule type" value="Genomic_DNA"/>
</dbReference>
<dbReference type="EMBL" id="CABT02000006">
    <property type="protein sequence ID" value="CCC08761.1"/>
    <property type="molecule type" value="Genomic_DNA"/>
</dbReference>
<dbReference type="RefSeq" id="XP_003347102.1">
    <property type="nucleotide sequence ID" value="XM_003347054.1"/>
</dbReference>
<dbReference type="GeneID" id="10804520"/>
<dbReference type="KEGG" id="smp:10804520"/>
<dbReference type="VEuPathDB" id="FungiDB:SMAC_05401"/>
<dbReference type="eggNOG" id="ENOG502S4ZK">
    <property type="taxonomic scope" value="Eukaryota"/>
</dbReference>
<dbReference type="HOGENOM" id="CLU_080756_0_0_1"/>
<dbReference type="InParanoid" id="O42837"/>
<dbReference type="OMA" id="FMTILWQ"/>
<dbReference type="OrthoDB" id="5398665at2759"/>
<dbReference type="Proteomes" id="UP000001881">
    <property type="component" value="Unassembled WGS sequence"/>
</dbReference>
<dbReference type="GO" id="GO:0005634">
    <property type="term" value="C:nucleus"/>
    <property type="evidence" value="ECO:0007669"/>
    <property type="project" value="UniProtKB-SubCell"/>
</dbReference>
<dbReference type="GO" id="GO:0008301">
    <property type="term" value="F:DNA binding, bending"/>
    <property type="evidence" value="ECO:0007669"/>
    <property type="project" value="InterPro"/>
</dbReference>
<dbReference type="GO" id="GO:0045895">
    <property type="term" value="P:positive regulation of mating-type specific transcription, DNA-templated"/>
    <property type="evidence" value="ECO:0007669"/>
    <property type="project" value="InterPro"/>
</dbReference>
<dbReference type="InterPro" id="IPR006856">
    <property type="entry name" value="MATalpha_HMGbox"/>
</dbReference>
<dbReference type="Pfam" id="PF04769">
    <property type="entry name" value="MATalpha_HMGbox"/>
    <property type="match status" value="1"/>
</dbReference>
<dbReference type="PROSITE" id="PS51325">
    <property type="entry name" value="ALPHA_BOX"/>
    <property type="match status" value="1"/>
</dbReference>
<protein>
    <recommendedName>
        <fullName>Mating type protein SmtA-1</fullName>
    </recommendedName>
</protein>
<evidence type="ECO:0000250" key="1">
    <source>
        <dbReference type="UniProtKB" id="P0CY06"/>
    </source>
</evidence>
<evidence type="ECO:0000255" key="2">
    <source>
        <dbReference type="PROSITE-ProRule" id="PRU00655"/>
    </source>
</evidence>
<evidence type="ECO:0000305" key="3"/>
<comment type="function">
    <text evidence="1">Mating type proteins are sequence specific DNA-binding proteins that act as master switches in fungal differentiation by controlling gene expression in a cell type-specific fashion. Transcriptional activator that induces the transcription of alpha-specific genes.</text>
</comment>
<comment type="subcellular location">
    <subcellularLocation>
        <location evidence="2">Nucleus</location>
    </subcellularLocation>
</comment>
<comment type="similarity">
    <text evidence="2">Belongs to the MATALPHA1 family.</text>
</comment>
<proteinExistence type="inferred from homology"/>
<sequence>MSSVDQIVKTFAKLPEGERNAAVNAILAMMPPGPGPVRQIPEPVSQAPAPKKKVNGFMGFRSYYSPLFSQFPQKARSPFMTILWQHDPFHNEWDFMCSVYSSIRNYLEQSNAQREKKITLQYWLHFAVPVMGVLGRENYLPTLGWDLVTMPNGTIDLMRIAMPLFRKNLQPMNGLCLFTKCQEGGLQVDNQHLVIAKLSDPSYDMIWFNKRPHYQQRHAVQADSSELGVSALFPRNHAVAAEADDVATLQLPHWMQQGDFGTESGYSPQFETLLGSILENGNATSNDSYNMALAMDVPMMGFNGGA</sequence>